<organism>
    <name type="scientific">Canis lupus familiaris</name>
    <name type="common">Dog</name>
    <name type="synonym">Canis familiaris</name>
    <dbReference type="NCBI Taxonomy" id="9615"/>
    <lineage>
        <taxon>Eukaryota</taxon>
        <taxon>Metazoa</taxon>
        <taxon>Chordata</taxon>
        <taxon>Craniata</taxon>
        <taxon>Vertebrata</taxon>
        <taxon>Euteleostomi</taxon>
        <taxon>Mammalia</taxon>
        <taxon>Eutheria</taxon>
        <taxon>Laurasiatheria</taxon>
        <taxon>Carnivora</taxon>
        <taxon>Caniformia</taxon>
        <taxon>Canidae</taxon>
        <taxon>Canis</taxon>
    </lineage>
</organism>
<sequence length="563" mass="61362">MRLRTCLLGLLALCVASKCSYSPEPDQQRTLPPGWVSLGRVDSEEELSLTFALRQQNVERLSKLVQAVSDPGSPHYGKYLTLEDVAELVRPSPLTFRTVQKWLSAAGARNCHSVTTQDFLTCWLSVRQAELLLSGAEFHRYVGGPTEIHVIRSLRPYQLPKALAPHVDFVGGLHRFPPTSSLRQRPEPQVSGTVGLHLGVTPSVIRQRYNLTAQDVGSGTTNNSQACAQFLEQYFHASDLAEFMRLFGGNFAHQASVARVVGQQGRGRAGIEASLDVEYLMSAGANISTWVYSSPGRHESQEPFLQWLLLLSNESALPHVHTVSYGDDEDSLSSAYIQRVNTEFMKAAARGLTLLFASGDSGAGCWSVSRRHQFRPSFPASSPYVTTVGGTSFQNPFRVTTEIVDYISGGGFSNVFPQPSYQEEAVVQFLSSSPHLPPSSYFNASGRAYPDVAALSDGYWVVSNSVPIPWVSGTSASTPVFGGILSLINEHRLLSGLPPLGFLNPRLYQQRGAGLFDVTRGCHESCLNEEVQGQGFCSGPGWDPVTGWGTPNFPALLKALIKP</sequence>
<gene>
    <name type="primary">TPP1</name>
    <name type="synonym">CLN2</name>
</gene>
<accession>Q9XSB8</accession>
<accession>Q45VT9</accession>
<reference key="1">
    <citation type="submission" date="1998-12" db="EMBL/GenBank/DDBJ databases">
        <title>Coding sequence and exon/intron organization of the canine CLN2 gene and its exclusion as the locus for ceroid lipofuscinosis in English setter dogs.</title>
        <authorList>
            <person name="Liu P.-C."/>
            <person name="Katz M.L."/>
            <person name="Siakotos A.N."/>
            <person name="Grob S.E."/>
            <person name="Johnson G.S."/>
        </authorList>
    </citation>
    <scope>NUCLEOTIDE SEQUENCE [GENOMIC DNA]</scope>
</reference>
<reference key="2">
    <citation type="journal article" date="2005" name="Anim. Genet.">
        <title>Evaluation of the canine TPP1 gene as a candidate for neuronal ceroid lipofuscinosis in Tibetan terrier and Polish Owczarek Nizinny dogs.</title>
        <authorList>
            <person name="Droegemueller C."/>
            <person name="Woehlke A."/>
            <person name="Distl O."/>
        </authorList>
    </citation>
    <scope>NUCLEOTIDE SEQUENCE [GENOMIC DNA]</scope>
    <scope>VARIANT ALA-427</scope>
    <source>
        <strain>Tibetan terrier</strain>
    </source>
</reference>
<reference key="3">
    <citation type="submission" date="2005-06" db="EMBL/GenBank/DDBJ databases">
        <title>Coding sequence and exon/intron organization of the canine TTP-1 gene and exclusion of TPP-1 mutations as the cause of hereditary ceroid lipofuscinosis in English Setter and Tibetan Terrier dogs.</title>
        <authorList>
            <person name="Sanders D.N."/>
            <person name="Katz M.L."/>
            <person name="Johnson G.S."/>
        </authorList>
    </citation>
    <scope>NUCLEOTIDE SEQUENCE [GENOMIC DNA]</scope>
    <scope>VARIANT ALA-427</scope>
    <source>
        <strain>Tibetan terrier</strain>
    </source>
</reference>
<proteinExistence type="inferred from homology"/>
<evidence type="ECO:0000250" key="1">
    <source>
        <dbReference type="UniProtKB" id="O14773"/>
    </source>
</evidence>
<evidence type="ECO:0000250" key="2">
    <source>
        <dbReference type="UniProtKB" id="Q9EQV6"/>
    </source>
</evidence>
<evidence type="ECO:0000255" key="3"/>
<evidence type="ECO:0000269" key="4">
    <source>
    </source>
</evidence>
<evidence type="ECO:0000269" key="5">
    <source ref="3"/>
</evidence>
<keyword id="KW-0068">Autocatalytic cleavage</keyword>
<keyword id="KW-0106">Calcium</keyword>
<keyword id="KW-1015">Disulfide bond</keyword>
<keyword id="KW-0325">Glycoprotein</keyword>
<keyword id="KW-0378">Hydrolase</keyword>
<keyword id="KW-0458">Lysosome</keyword>
<keyword id="KW-0479">Metal-binding</keyword>
<keyword id="KW-0645">Protease</keyword>
<keyword id="KW-1185">Reference proteome</keyword>
<keyword id="KW-0720">Serine protease</keyword>
<keyword id="KW-0732">Signal</keyword>
<keyword id="KW-0865">Zymogen</keyword>
<feature type="signal peptide" evidence="1">
    <location>
        <begin position="1"/>
        <end position="19"/>
    </location>
</feature>
<feature type="propeptide" id="PRO_0000027372" description="Removed in mature form" evidence="1">
    <location>
        <begin position="20"/>
        <end position="195"/>
    </location>
</feature>
<feature type="chain" id="PRO_0000027373" description="Tripeptidyl-peptidase 1">
    <location>
        <begin position="196"/>
        <end position="563"/>
    </location>
</feature>
<feature type="domain" description="Peptidase S53">
    <location>
        <begin position="199"/>
        <end position="563"/>
    </location>
</feature>
<feature type="active site" description="Charge relay system" evidence="1">
    <location>
        <position position="272"/>
    </location>
</feature>
<feature type="active site" description="Charge relay system" evidence="1">
    <location>
        <position position="276"/>
    </location>
</feature>
<feature type="active site" description="Charge relay system" evidence="1">
    <location>
        <position position="475"/>
    </location>
</feature>
<feature type="binding site" evidence="1">
    <location>
        <position position="517"/>
    </location>
    <ligand>
        <name>Ca(2+)</name>
        <dbReference type="ChEBI" id="CHEBI:29108"/>
    </ligand>
</feature>
<feature type="binding site" evidence="1">
    <location>
        <position position="518"/>
    </location>
    <ligand>
        <name>Ca(2+)</name>
        <dbReference type="ChEBI" id="CHEBI:29108"/>
    </ligand>
</feature>
<feature type="binding site" evidence="1">
    <location>
        <position position="539"/>
    </location>
    <ligand>
        <name>Ca(2+)</name>
        <dbReference type="ChEBI" id="CHEBI:29108"/>
    </ligand>
</feature>
<feature type="binding site" evidence="1">
    <location>
        <position position="541"/>
    </location>
    <ligand>
        <name>Ca(2+)</name>
        <dbReference type="ChEBI" id="CHEBI:29108"/>
    </ligand>
</feature>
<feature type="binding site" evidence="1">
    <location>
        <position position="543"/>
    </location>
    <ligand>
        <name>Ca(2+)</name>
        <dbReference type="ChEBI" id="CHEBI:29108"/>
    </ligand>
</feature>
<feature type="glycosylation site" description="N-linked (GlcNAc...) asparagine" evidence="3">
    <location>
        <position position="210"/>
    </location>
</feature>
<feature type="glycosylation site" description="N-linked (GlcNAc...) asparagine" evidence="3">
    <location>
        <position position="222"/>
    </location>
</feature>
<feature type="glycosylation site" description="N-linked (GlcNAc...) asparagine" evidence="3">
    <location>
        <position position="286"/>
    </location>
</feature>
<feature type="glycosylation site" description="N-linked (GlcNAc...) asparagine" evidence="3">
    <location>
        <position position="313"/>
    </location>
</feature>
<feature type="glycosylation site" description="N-linked (GlcNAc...) asparagine" evidence="3">
    <location>
        <position position="443"/>
    </location>
</feature>
<feature type="disulfide bond" evidence="1">
    <location>
        <begin position="111"/>
        <end position="122"/>
    </location>
</feature>
<feature type="disulfide bond" evidence="1">
    <location>
        <begin position="365"/>
        <end position="526"/>
    </location>
</feature>
<feature type="disulfide bond" evidence="1">
    <location>
        <begin position="522"/>
        <end position="537"/>
    </location>
</feature>
<feature type="sequence variant" evidence="4 5">
    <original>V</original>
    <variation>A</variation>
    <location>
        <position position="427"/>
    </location>
</feature>
<dbReference type="EC" id="3.4.14.9"/>
<dbReference type="EMBL" id="AF114167">
    <property type="protein sequence ID" value="AAD25043.1"/>
    <property type="molecule type" value="Genomic_DNA"/>
</dbReference>
<dbReference type="EMBL" id="DQ100344">
    <property type="protein sequence ID" value="AAZ38727.1"/>
    <property type="molecule type" value="Genomic_DNA"/>
</dbReference>
<dbReference type="RefSeq" id="NP_001013869.1">
    <property type="nucleotide sequence ID" value="NM_001013847.1"/>
</dbReference>
<dbReference type="SMR" id="Q9XSB8"/>
<dbReference type="FunCoup" id="Q9XSB8">
    <property type="interactions" value="129"/>
</dbReference>
<dbReference type="STRING" id="9615.ENSCAFP00000009732"/>
<dbReference type="MEROPS" id="S53.003"/>
<dbReference type="GlyCosmos" id="Q9XSB8">
    <property type="glycosylation" value="5 sites, No reported glycans"/>
</dbReference>
<dbReference type="PaxDb" id="9612-ENSCAFP00000009732"/>
<dbReference type="GeneID" id="485337"/>
<dbReference type="KEGG" id="cfa:485337"/>
<dbReference type="CTD" id="1200"/>
<dbReference type="eggNOG" id="ENOG502QR6D">
    <property type="taxonomic scope" value="Eukaryota"/>
</dbReference>
<dbReference type="InParanoid" id="Q9XSB8"/>
<dbReference type="OrthoDB" id="2919105at2759"/>
<dbReference type="Proteomes" id="UP000002254">
    <property type="component" value="Unplaced"/>
</dbReference>
<dbReference type="Proteomes" id="UP000694429">
    <property type="component" value="Unplaced"/>
</dbReference>
<dbReference type="Proteomes" id="UP000694542">
    <property type="component" value="Unplaced"/>
</dbReference>
<dbReference type="Proteomes" id="UP000805418">
    <property type="component" value="Unplaced"/>
</dbReference>
<dbReference type="GO" id="GO:0005794">
    <property type="term" value="C:Golgi apparatus"/>
    <property type="evidence" value="ECO:0000250"/>
    <property type="project" value="UniProtKB"/>
</dbReference>
<dbReference type="GO" id="GO:0005764">
    <property type="term" value="C:lysosome"/>
    <property type="evidence" value="ECO:0000250"/>
    <property type="project" value="UniProtKB"/>
</dbReference>
<dbReference type="GO" id="GO:0042470">
    <property type="term" value="C:melanosome"/>
    <property type="evidence" value="ECO:0007669"/>
    <property type="project" value="UniProtKB-SubCell"/>
</dbReference>
<dbReference type="GO" id="GO:0045121">
    <property type="term" value="C:membrane raft"/>
    <property type="evidence" value="ECO:0000250"/>
    <property type="project" value="UniProtKB"/>
</dbReference>
<dbReference type="GO" id="GO:0055037">
    <property type="term" value="C:recycling endosome"/>
    <property type="evidence" value="ECO:0000250"/>
    <property type="project" value="UniProtKB"/>
</dbReference>
<dbReference type="GO" id="GO:0004175">
    <property type="term" value="F:endopeptidase activity"/>
    <property type="evidence" value="ECO:0000250"/>
    <property type="project" value="UniProtKB"/>
</dbReference>
<dbReference type="GO" id="GO:0035727">
    <property type="term" value="F:lysophosphatidic acid binding"/>
    <property type="evidence" value="ECO:0000250"/>
    <property type="project" value="UniProtKB"/>
</dbReference>
<dbReference type="GO" id="GO:0046872">
    <property type="term" value="F:metal ion binding"/>
    <property type="evidence" value="ECO:0007669"/>
    <property type="project" value="UniProtKB-KW"/>
</dbReference>
<dbReference type="GO" id="GO:0008233">
    <property type="term" value="F:peptidase activity"/>
    <property type="evidence" value="ECO:0000250"/>
    <property type="project" value="UniProtKB"/>
</dbReference>
<dbReference type="GO" id="GO:0004252">
    <property type="term" value="F:serine-type endopeptidase activity"/>
    <property type="evidence" value="ECO:0007669"/>
    <property type="project" value="InterPro"/>
</dbReference>
<dbReference type="GO" id="GO:0008236">
    <property type="term" value="F:serine-type peptidase activity"/>
    <property type="evidence" value="ECO:0000250"/>
    <property type="project" value="UniProtKB"/>
</dbReference>
<dbReference type="GO" id="GO:0120146">
    <property type="term" value="F:sulfatide binding"/>
    <property type="evidence" value="ECO:0000250"/>
    <property type="project" value="UniProtKB"/>
</dbReference>
<dbReference type="GO" id="GO:0008240">
    <property type="term" value="F:tripeptidyl-peptidase activity"/>
    <property type="evidence" value="ECO:0000250"/>
    <property type="project" value="UniProtKB"/>
</dbReference>
<dbReference type="GO" id="GO:0045453">
    <property type="term" value="P:bone resorption"/>
    <property type="evidence" value="ECO:0000250"/>
    <property type="project" value="UniProtKB"/>
</dbReference>
<dbReference type="GO" id="GO:0007417">
    <property type="term" value="P:central nervous system development"/>
    <property type="evidence" value="ECO:0000318"/>
    <property type="project" value="GO_Central"/>
</dbReference>
<dbReference type="GO" id="GO:0007399">
    <property type="term" value="P:nervous system development"/>
    <property type="evidence" value="ECO:0000250"/>
    <property type="project" value="UniProtKB"/>
</dbReference>
<dbReference type="GO" id="GO:0043171">
    <property type="term" value="P:peptide catabolic process"/>
    <property type="evidence" value="ECO:0000250"/>
    <property type="project" value="UniProtKB"/>
</dbReference>
<dbReference type="GO" id="GO:0006508">
    <property type="term" value="P:proteolysis"/>
    <property type="evidence" value="ECO:0000250"/>
    <property type="project" value="UniProtKB"/>
</dbReference>
<dbReference type="CDD" id="cd04056">
    <property type="entry name" value="Peptidases_S53"/>
    <property type="match status" value="1"/>
</dbReference>
<dbReference type="CDD" id="cd11377">
    <property type="entry name" value="Pro-peptidase_S53"/>
    <property type="match status" value="1"/>
</dbReference>
<dbReference type="FunFam" id="3.40.50.200:FF:000012">
    <property type="entry name" value="Tripeptidyl-peptidase 1 preproprotein"/>
    <property type="match status" value="1"/>
</dbReference>
<dbReference type="Gene3D" id="3.40.50.200">
    <property type="entry name" value="Peptidase S8/S53 domain"/>
    <property type="match status" value="1"/>
</dbReference>
<dbReference type="InterPro" id="IPR000209">
    <property type="entry name" value="Peptidase_S8/S53_dom"/>
</dbReference>
<dbReference type="InterPro" id="IPR036852">
    <property type="entry name" value="Peptidase_S8/S53_dom_sf"/>
</dbReference>
<dbReference type="InterPro" id="IPR015366">
    <property type="entry name" value="S53_propep"/>
</dbReference>
<dbReference type="InterPro" id="IPR030400">
    <property type="entry name" value="Sedolisin_dom"/>
</dbReference>
<dbReference type="InterPro" id="IPR050819">
    <property type="entry name" value="Tripeptidyl-peptidase_I"/>
</dbReference>
<dbReference type="PANTHER" id="PTHR14218">
    <property type="entry name" value="PROTEASE S8 TRIPEPTIDYL PEPTIDASE I CLN2"/>
    <property type="match status" value="1"/>
</dbReference>
<dbReference type="PANTHER" id="PTHR14218:SF15">
    <property type="entry name" value="TRIPEPTIDYL-PEPTIDASE 1"/>
    <property type="match status" value="1"/>
</dbReference>
<dbReference type="Pfam" id="PF00082">
    <property type="entry name" value="Peptidase_S8"/>
    <property type="match status" value="1"/>
</dbReference>
<dbReference type="Pfam" id="PF09286">
    <property type="entry name" value="Pro-kuma_activ"/>
    <property type="match status" value="1"/>
</dbReference>
<dbReference type="SMART" id="SM00944">
    <property type="entry name" value="Pro-kuma_activ"/>
    <property type="match status" value="1"/>
</dbReference>
<dbReference type="SUPFAM" id="SSF54897">
    <property type="entry name" value="Protease propeptides/inhibitors"/>
    <property type="match status" value="1"/>
</dbReference>
<dbReference type="SUPFAM" id="SSF52743">
    <property type="entry name" value="Subtilisin-like"/>
    <property type="match status" value="1"/>
</dbReference>
<dbReference type="PROSITE" id="PS51695">
    <property type="entry name" value="SEDOLISIN"/>
    <property type="match status" value="1"/>
</dbReference>
<comment type="function">
    <text evidence="2">Lysosomal serine protease with tripeptidyl-peptidase I activity. May act as a non-specific lysosomal peptidase which generates tripeptides from the breakdown products produced by lysosomal proteinases. Requires substrates with an unsubstituted N-terminus (By similarity).</text>
</comment>
<comment type="catalytic activity">
    <reaction>
        <text>Release of an N-terminal tripeptide from a polypeptide, but also has endopeptidase activity.</text>
        <dbReference type="EC" id="3.4.14.9"/>
    </reaction>
</comment>
<comment type="cofactor">
    <cofactor evidence="1">
        <name>Ca(2+)</name>
        <dbReference type="ChEBI" id="CHEBI:29108"/>
    </cofactor>
    <text evidence="1">Binds 1 Ca(2+) ion per subunit.</text>
</comment>
<comment type="subunit">
    <text evidence="1">Monomer. Interacts with CLN5. Interacts with CLN3 (By similarity).</text>
</comment>
<comment type="subcellular location">
    <subcellularLocation>
        <location evidence="1">Lysosome</location>
    </subcellularLocation>
    <subcellularLocation>
        <location evidence="1">Melanosome</location>
    </subcellularLocation>
</comment>
<comment type="PTM">
    <text evidence="1">Activated by autocatalytic proteolytical processing upon acidification. N-glycosylation is required for processing and activity (By similarity).</text>
</comment>
<protein>
    <recommendedName>
        <fullName>Tripeptidyl-peptidase 1</fullName>
        <shortName>TPP-1</shortName>
        <ecNumber>3.4.14.9</ecNumber>
    </recommendedName>
    <alternativeName>
        <fullName>Lysosomal pepstatin-insensitive protease</fullName>
        <shortName>LPIC</shortName>
    </alternativeName>
    <alternativeName>
        <fullName>Tripeptidyl aminopeptidase</fullName>
    </alternativeName>
    <alternativeName>
        <fullName>Tripeptidyl-peptidase I</fullName>
        <shortName>TPP-I</shortName>
    </alternativeName>
</protein>
<name>TPP1_CANLF</name>